<sequence length="670" mass="73389">MESLQDKITHLRTLLRHYEYQYHVLDAPAVPDAEYDRLMGELRELEAAHPELLTTDSPTQRVGAAPLSAFEQVRHEVPMLSLDNAFDEESYRAFNKRVQDRLKSSDDLTFCCELKLDGLAVSLLYEQGELVRAATRGDGTTGENITANVRTIRAIPLRLSGDNIPERLEVRGEVFMPLAGFEKMNEQARRGGQKIFANPRNAAAGSLRQLDPRITAKRPLTFFCYGLGLLEGGEMPRSHMARLQQFKAWGLPVSDRVRLCHSPSDVLDFYHQVEADRPALGFDIDGVVIKVDSLEQQEQLGFVARAPRWAVAFKFPAQEQITTVRDVEFQVGRTGAITPVARLEPVLVAGVMVSNATLHNADEIERLGLRIGDRVVIRRAGDVIPQVMSVVESAEGARDVIFPTHCPVCGSDVERVEGEVVARCTGGLICGAQRKGALKHFVSRRALDIDGMGEKIIDQLVDKEYVKNPAELFELTAGKLTGLDRMGPKSAQNVVDALAKAKQTTFARFLYALGISEVGEATAANLAAHFGTLEALMAADIDTLITVPDVGKVVASHVRNFLDEESNREIIRLLVEKAGVNWPDVVVVKAEEIDSPFAGKTVVLTGSLSILSRDDAKERLQALGAKVSGSVSKKTDLVIAGEAAGSKLAKAQELGIDVIDEQEMMRLLGE</sequence>
<accession>B2VE40</accession>
<keyword id="KW-0227">DNA damage</keyword>
<keyword id="KW-0234">DNA repair</keyword>
<keyword id="KW-0235">DNA replication</keyword>
<keyword id="KW-0436">Ligase</keyword>
<keyword id="KW-0460">Magnesium</keyword>
<keyword id="KW-0464">Manganese</keyword>
<keyword id="KW-0479">Metal-binding</keyword>
<keyword id="KW-0520">NAD</keyword>
<keyword id="KW-1185">Reference proteome</keyword>
<keyword id="KW-0862">Zinc</keyword>
<gene>
    <name evidence="1" type="primary">ligA</name>
    <name type="ordered locus">ETA_11030</name>
</gene>
<name>DNLJ_ERWT9</name>
<organism>
    <name type="scientific">Erwinia tasmaniensis (strain DSM 17950 / CFBP 7177 / CIP 109463 / NCPPB 4357 / Et1/99)</name>
    <dbReference type="NCBI Taxonomy" id="465817"/>
    <lineage>
        <taxon>Bacteria</taxon>
        <taxon>Pseudomonadati</taxon>
        <taxon>Pseudomonadota</taxon>
        <taxon>Gammaproteobacteria</taxon>
        <taxon>Enterobacterales</taxon>
        <taxon>Erwiniaceae</taxon>
        <taxon>Erwinia</taxon>
    </lineage>
</organism>
<reference key="1">
    <citation type="journal article" date="2008" name="Environ. Microbiol.">
        <title>The genome of Erwinia tasmaniensis strain Et1/99, a non-pathogenic bacterium in the genus Erwinia.</title>
        <authorList>
            <person name="Kube M."/>
            <person name="Migdoll A.M."/>
            <person name="Mueller I."/>
            <person name="Kuhl H."/>
            <person name="Beck A."/>
            <person name="Reinhardt R."/>
            <person name="Geider K."/>
        </authorList>
    </citation>
    <scope>NUCLEOTIDE SEQUENCE [LARGE SCALE GENOMIC DNA]</scope>
    <source>
        <strain>DSM 17950 / CFBP 7177 / CIP 109463 / NCPPB 4357 / Et1/99</strain>
    </source>
</reference>
<evidence type="ECO:0000255" key="1">
    <source>
        <dbReference type="HAMAP-Rule" id="MF_01588"/>
    </source>
</evidence>
<proteinExistence type="inferred from homology"/>
<dbReference type="EC" id="6.5.1.2" evidence="1"/>
<dbReference type="EMBL" id="CU468135">
    <property type="protein sequence ID" value="CAO96149.1"/>
    <property type="molecule type" value="Genomic_DNA"/>
</dbReference>
<dbReference type="RefSeq" id="WP_012440849.1">
    <property type="nucleotide sequence ID" value="NC_010694.1"/>
</dbReference>
<dbReference type="SMR" id="B2VE40"/>
<dbReference type="STRING" id="465817.ETA_11030"/>
<dbReference type="KEGG" id="eta:ETA_11030"/>
<dbReference type="eggNOG" id="COG0272">
    <property type="taxonomic scope" value="Bacteria"/>
</dbReference>
<dbReference type="HOGENOM" id="CLU_007764_2_1_6"/>
<dbReference type="OrthoDB" id="9759736at2"/>
<dbReference type="Proteomes" id="UP000001726">
    <property type="component" value="Chromosome"/>
</dbReference>
<dbReference type="GO" id="GO:0005829">
    <property type="term" value="C:cytosol"/>
    <property type="evidence" value="ECO:0007669"/>
    <property type="project" value="TreeGrafter"/>
</dbReference>
<dbReference type="GO" id="GO:0003677">
    <property type="term" value="F:DNA binding"/>
    <property type="evidence" value="ECO:0007669"/>
    <property type="project" value="InterPro"/>
</dbReference>
<dbReference type="GO" id="GO:0003911">
    <property type="term" value="F:DNA ligase (NAD+) activity"/>
    <property type="evidence" value="ECO:0007669"/>
    <property type="project" value="UniProtKB-UniRule"/>
</dbReference>
<dbReference type="GO" id="GO:0046872">
    <property type="term" value="F:metal ion binding"/>
    <property type="evidence" value="ECO:0007669"/>
    <property type="project" value="UniProtKB-KW"/>
</dbReference>
<dbReference type="GO" id="GO:0006281">
    <property type="term" value="P:DNA repair"/>
    <property type="evidence" value="ECO:0007669"/>
    <property type="project" value="UniProtKB-KW"/>
</dbReference>
<dbReference type="GO" id="GO:0006260">
    <property type="term" value="P:DNA replication"/>
    <property type="evidence" value="ECO:0007669"/>
    <property type="project" value="UniProtKB-KW"/>
</dbReference>
<dbReference type="CDD" id="cd17748">
    <property type="entry name" value="BRCT_DNA_ligase_like"/>
    <property type="match status" value="1"/>
</dbReference>
<dbReference type="CDD" id="cd00114">
    <property type="entry name" value="LIGANc"/>
    <property type="match status" value="1"/>
</dbReference>
<dbReference type="FunFam" id="1.10.150.20:FF:000006">
    <property type="entry name" value="DNA ligase"/>
    <property type="match status" value="1"/>
</dbReference>
<dbReference type="FunFam" id="1.10.150.20:FF:000007">
    <property type="entry name" value="DNA ligase"/>
    <property type="match status" value="1"/>
</dbReference>
<dbReference type="FunFam" id="1.10.287.610:FF:000002">
    <property type="entry name" value="DNA ligase"/>
    <property type="match status" value="1"/>
</dbReference>
<dbReference type="FunFam" id="2.40.50.140:FF:000012">
    <property type="entry name" value="DNA ligase"/>
    <property type="match status" value="1"/>
</dbReference>
<dbReference type="FunFam" id="3.30.470.30:FF:000001">
    <property type="entry name" value="DNA ligase"/>
    <property type="match status" value="1"/>
</dbReference>
<dbReference type="FunFam" id="3.40.50.10190:FF:000004">
    <property type="entry name" value="DNA ligase"/>
    <property type="match status" value="1"/>
</dbReference>
<dbReference type="Gene3D" id="6.20.10.30">
    <property type="match status" value="1"/>
</dbReference>
<dbReference type="Gene3D" id="1.10.150.20">
    <property type="entry name" value="5' to 3' exonuclease, C-terminal subdomain"/>
    <property type="match status" value="2"/>
</dbReference>
<dbReference type="Gene3D" id="3.40.50.10190">
    <property type="entry name" value="BRCT domain"/>
    <property type="match status" value="1"/>
</dbReference>
<dbReference type="Gene3D" id="3.30.470.30">
    <property type="entry name" value="DNA ligase/mRNA capping enzyme"/>
    <property type="match status" value="1"/>
</dbReference>
<dbReference type="Gene3D" id="1.10.287.610">
    <property type="entry name" value="Helix hairpin bin"/>
    <property type="match status" value="1"/>
</dbReference>
<dbReference type="Gene3D" id="2.40.50.140">
    <property type="entry name" value="Nucleic acid-binding proteins"/>
    <property type="match status" value="1"/>
</dbReference>
<dbReference type="HAMAP" id="MF_01588">
    <property type="entry name" value="DNA_ligase_A"/>
    <property type="match status" value="1"/>
</dbReference>
<dbReference type="InterPro" id="IPR001357">
    <property type="entry name" value="BRCT_dom"/>
</dbReference>
<dbReference type="InterPro" id="IPR036420">
    <property type="entry name" value="BRCT_dom_sf"/>
</dbReference>
<dbReference type="InterPro" id="IPR041663">
    <property type="entry name" value="DisA/LigA_HHH"/>
</dbReference>
<dbReference type="InterPro" id="IPR001679">
    <property type="entry name" value="DNA_ligase"/>
</dbReference>
<dbReference type="InterPro" id="IPR018239">
    <property type="entry name" value="DNA_ligase_AS"/>
</dbReference>
<dbReference type="InterPro" id="IPR033136">
    <property type="entry name" value="DNA_ligase_CS"/>
</dbReference>
<dbReference type="InterPro" id="IPR013839">
    <property type="entry name" value="DNAligase_adenylation"/>
</dbReference>
<dbReference type="InterPro" id="IPR013840">
    <property type="entry name" value="DNAligase_N"/>
</dbReference>
<dbReference type="InterPro" id="IPR003583">
    <property type="entry name" value="Hlx-hairpin-Hlx_DNA-bd_motif"/>
</dbReference>
<dbReference type="InterPro" id="IPR012340">
    <property type="entry name" value="NA-bd_OB-fold"/>
</dbReference>
<dbReference type="InterPro" id="IPR004150">
    <property type="entry name" value="NAD_DNA_ligase_OB"/>
</dbReference>
<dbReference type="InterPro" id="IPR010994">
    <property type="entry name" value="RuvA_2-like"/>
</dbReference>
<dbReference type="InterPro" id="IPR004149">
    <property type="entry name" value="Znf_DNAligase_C4"/>
</dbReference>
<dbReference type="NCBIfam" id="TIGR00575">
    <property type="entry name" value="dnlj"/>
    <property type="match status" value="1"/>
</dbReference>
<dbReference type="NCBIfam" id="NF005932">
    <property type="entry name" value="PRK07956.1"/>
    <property type="match status" value="1"/>
</dbReference>
<dbReference type="PANTHER" id="PTHR23389">
    <property type="entry name" value="CHROMOSOME TRANSMISSION FIDELITY FACTOR 18"/>
    <property type="match status" value="1"/>
</dbReference>
<dbReference type="PANTHER" id="PTHR23389:SF9">
    <property type="entry name" value="DNA LIGASE"/>
    <property type="match status" value="1"/>
</dbReference>
<dbReference type="Pfam" id="PF00533">
    <property type="entry name" value="BRCT"/>
    <property type="match status" value="1"/>
</dbReference>
<dbReference type="Pfam" id="PF01653">
    <property type="entry name" value="DNA_ligase_aden"/>
    <property type="match status" value="1"/>
</dbReference>
<dbReference type="Pfam" id="PF03120">
    <property type="entry name" value="DNA_ligase_OB"/>
    <property type="match status" value="1"/>
</dbReference>
<dbReference type="Pfam" id="PF03119">
    <property type="entry name" value="DNA_ligase_ZBD"/>
    <property type="match status" value="1"/>
</dbReference>
<dbReference type="Pfam" id="PF12826">
    <property type="entry name" value="HHH_2"/>
    <property type="match status" value="1"/>
</dbReference>
<dbReference type="Pfam" id="PF14520">
    <property type="entry name" value="HHH_5"/>
    <property type="match status" value="1"/>
</dbReference>
<dbReference type="Pfam" id="PF22745">
    <property type="entry name" value="Nlig-Ia"/>
    <property type="match status" value="1"/>
</dbReference>
<dbReference type="PIRSF" id="PIRSF001604">
    <property type="entry name" value="LigA"/>
    <property type="match status" value="1"/>
</dbReference>
<dbReference type="SMART" id="SM00292">
    <property type="entry name" value="BRCT"/>
    <property type="match status" value="1"/>
</dbReference>
<dbReference type="SMART" id="SM00278">
    <property type="entry name" value="HhH1"/>
    <property type="match status" value="4"/>
</dbReference>
<dbReference type="SMART" id="SM00532">
    <property type="entry name" value="LIGANc"/>
    <property type="match status" value="1"/>
</dbReference>
<dbReference type="SUPFAM" id="SSF52113">
    <property type="entry name" value="BRCT domain"/>
    <property type="match status" value="1"/>
</dbReference>
<dbReference type="SUPFAM" id="SSF56091">
    <property type="entry name" value="DNA ligase/mRNA capping enzyme, catalytic domain"/>
    <property type="match status" value="1"/>
</dbReference>
<dbReference type="SUPFAM" id="SSF50249">
    <property type="entry name" value="Nucleic acid-binding proteins"/>
    <property type="match status" value="1"/>
</dbReference>
<dbReference type="SUPFAM" id="SSF47781">
    <property type="entry name" value="RuvA domain 2-like"/>
    <property type="match status" value="1"/>
</dbReference>
<dbReference type="PROSITE" id="PS50172">
    <property type="entry name" value="BRCT"/>
    <property type="match status" value="1"/>
</dbReference>
<dbReference type="PROSITE" id="PS01055">
    <property type="entry name" value="DNA_LIGASE_N1"/>
    <property type="match status" value="1"/>
</dbReference>
<dbReference type="PROSITE" id="PS01056">
    <property type="entry name" value="DNA_LIGASE_N2"/>
    <property type="match status" value="1"/>
</dbReference>
<comment type="function">
    <text evidence="1">DNA ligase that catalyzes the formation of phosphodiester linkages between 5'-phosphoryl and 3'-hydroxyl groups in double-stranded DNA using NAD as a coenzyme and as the energy source for the reaction. It is essential for DNA replication and repair of damaged DNA.</text>
</comment>
<comment type="catalytic activity">
    <reaction evidence="1">
        <text>NAD(+) + (deoxyribonucleotide)n-3'-hydroxyl + 5'-phospho-(deoxyribonucleotide)m = (deoxyribonucleotide)n+m + AMP + beta-nicotinamide D-nucleotide.</text>
        <dbReference type="EC" id="6.5.1.2"/>
    </reaction>
</comment>
<comment type="cofactor">
    <cofactor evidence="1">
        <name>Mg(2+)</name>
        <dbReference type="ChEBI" id="CHEBI:18420"/>
    </cofactor>
    <cofactor evidence="1">
        <name>Mn(2+)</name>
        <dbReference type="ChEBI" id="CHEBI:29035"/>
    </cofactor>
</comment>
<comment type="similarity">
    <text evidence="1">Belongs to the NAD-dependent DNA ligase family. LigA subfamily.</text>
</comment>
<feature type="chain" id="PRO_0000380381" description="DNA ligase">
    <location>
        <begin position="1"/>
        <end position="670"/>
    </location>
</feature>
<feature type="domain" description="BRCT" evidence="1">
    <location>
        <begin position="592"/>
        <end position="670"/>
    </location>
</feature>
<feature type="active site" description="N6-AMP-lysine intermediate" evidence="1">
    <location>
        <position position="115"/>
    </location>
</feature>
<feature type="binding site" evidence="1">
    <location>
        <begin position="32"/>
        <end position="36"/>
    </location>
    <ligand>
        <name>NAD(+)</name>
        <dbReference type="ChEBI" id="CHEBI:57540"/>
    </ligand>
</feature>
<feature type="binding site" evidence="1">
    <location>
        <begin position="81"/>
        <end position="82"/>
    </location>
    <ligand>
        <name>NAD(+)</name>
        <dbReference type="ChEBI" id="CHEBI:57540"/>
    </ligand>
</feature>
<feature type="binding site" evidence="1">
    <location>
        <position position="113"/>
    </location>
    <ligand>
        <name>NAD(+)</name>
        <dbReference type="ChEBI" id="CHEBI:57540"/>
    </ligand>
</feature>
<feature type="binding site" evidence="1">
    <location>
        <position position="136"/>
    </location>
    <ligand>
        <name>NAD(+)</name>
        <dbReference type="ChEBI" id="CHEBI:57540"/>
    </ligand>
</feature>
<feature type="binding site" evidence="1">
    <location>
        <position position="173"/>
    </location>
    <ligand>
        <name>NAD(+)</name>
        <dbReference type="ChEBI" id="CHEBI:57540"/>
    </ligand>
</feature>
<feature type="binding site" evidence="1">
    <location>
        <position position="290"/>
    </location>
    <ligand>
        <name>NAD(+)</name>
        <dbReference type="ChEBI" id="CHEBI:57540"/>
    </ligand>
</feature>
<feature type="binding site" evidence="1">
    <location>
        <position position="314"/>
    </location>
    <ligand>
        <name>NAD(+)</name>
        <dbReference type="ChEBI" id="CHEBI:57540"/>
    </ligand>
</feature>
<feature type="binding site" evidence="1">
    <location>
        <position position="406"/>
    </location>
    <ligand>
        <name>Zn(2+)</name>
        <dbReference type="ChEBI" id="CHEBI:29105"/>
    </ligand>
</feature>
<feature type="binding site" evidence="1">
    <location>
        <position position="409"/>
    </location>
    <ligand>
        <name>Zn(2+)</name>
        <dbReference type="ChEBI" id="CHEBI:29105"/>
    </ligand>
</feature>
<feature type="binding site" evidence="1">
    <location>
        <position position="424"/>
    </location>
    <ligand>
        <name>Zn(2+)</name>
        <dbReference type="ChEBI" id="CHEBI:29105"/>
    </ligand>
</feature>
<feature type="binding site" evidence="1">
    <location>
        <position position="430"/>
    </location>
    <ligand>
        <name>Zn(2+)</name>
        <dbReference type="ChEBI" id="CHEBI:29105"/>
    </ligand>
</feature>
<protein>
    <recommendedName>
        <fullName evidence="1">DNA ligase</fullName>
        <ecNumber evidence="1">6.5.1.2</ecNumber>
    </recommendedName>
    <alternativeName>
        <fullName evidence="1">Polydeoxyribonucleotide synthase [NAD(+)]</fullName>
    </alternativeName>
</protein>